<comment type="function">
    <text evidence="1">Catalyzes a salvage reaction resulting in the formation of AMP, that is energically less costly than de novo synthesis.</text>
</comment>
<comment type="catalytic activity">
    <reaction evidence="1">
        <text>AMP + diphosphate = 5-phospho-alpha-D-ribose 1-diphosphate + adenine</text>
        <dbReference type="Rhea" id="RHEA:16609"/>
        <dbReference type="ChEBI" id="CHEBI:16708"/>
        <dbReference type="ChEBI" id="CHEBI:33019"/>
        <dbReference type="ChEBI" id="CHEBI:58017"/>
        <dbReference type="ChEBI" id="CHEBI:456215"/>
        <dbReference type="EC" id="2.4.2.7"/>
    </reaction>
</comment>
<comment type="pathway">
    <text evidence="1">Purine metabolism; AMP biosynthesis via salvage pathway; AMP from adenine: step 1/1.</text>
</comment>
<comment type="subunit">
    <text evidence="1">Homodimer.</text>
</comment>
<comment type="subcellular location">
    <subcellularLocation>
        <location evidence="1">Cytoplasm</location>
    </subcellularLocation>
</comment>
<comment type="similarity">
    <text evidence="1">Belongs to the purine/pyrimidine phosphoribosyltransferase family.</text>
</comment>
<sequence length="185" mass="19975">MNITERTIQVIRNRIRSVPDYPSPGVVFRDITPLMEDGPSLHAAVDALAEATRSLDYDRVISAEARGFVFGTALAYRSRKGLVLARKPGKLPREVISVSYELEYGTDSLEVHADAIPPGTRVLVADDLLATGGTARAMCELVEKSGGSVAGCAFLIELGFLEGRKKLLAGYDVISLINYHDPAAE</sequence>
<keyword id="KW-0963">Cytoplasm</keyword>
<keyword id="KW-0328">Glycosyltransferase</keyword>
<keyword id="KW-0660">Purine salvage</keyword>
<keyword id="KW-1185">Reference proteome</keyword>
<keyword id="KW-0808">Transferase</keyword>
<protein>
    <recommendedName>
        <fullName evidence="1">Adenine phosphoribosyltransferase</fullName>
        <shortName evidence="1">APRT</shortName>
        <ecNumber evidence="1">2.4.2.7</ecNumber>
    </recommendedName>
</protein>
<name>APT_RUBXD</name>
<reference key="1">
    <citation type="submission" date="2006-06" db="EMBL/GenBank/DDBJ databases">
        <title>Complete sequence of Rubrobacter xylanophilus DSM 9941.</title>
        <authorList>
            <consortium name="US DOE Joint Genome Institute"/>
            <person name="Copeland A."/>
            <person name="Lucas S."/>
            <person name="Lapidus A."/>
            <person name="Barry K."/>
            <person name="Detter J.C."/>
            <person name="Glavina del Rio T."/>
            <person name="Hammon N."/>
            <person name="Israni S."/>
            <person name="Dalin E."/>
            <person name="Tice H."/>
            <person name="Pitluck S."/>
            <person name="Munk A.C."/>
            <person name="Brettin T."/>
            <person name="Bruce D."/>
            <person name="Han C."/>
            <person name="Tapia R."/>
            <person name="Gilna P."/>
            <person name="Schmutz J."/>
            <person name="Larimer F."/>
            <person name="Land M."/>
            <person name="Hauser L."/>
            <person name="Kyrpides N."/>
            <person name="Lykidis A."/>
            <person name="da Costa M.S."/>
            <person name="Rainey F.A."/>
            <person name="Empadinhas N."/>
            <person name="Jolivet E."/>
            <person name="Battista J.R."/>
            <person name="Richardson P."/>
        </authorList>
    </citation>
    <scope>NUCLEOTIDE SEQUENCE [LARGE SCALE GENOMIC DNA]</scope>
    <source>
        <strain>DSM 9941 / JCM 11954 / NBRC 16129 / PRD-1</strain>
    </source>
</reference>
<gene>
    <name evidence="1" type="primary">apt</name>
    <name type="ordered locus">Rxyl_1432</name>
</gene>
<dbReference type="EC" id="2.4.2.7" evidence="1"/>
<dbReference type="EMBL" id="CP000386">
    <property type="protein sequence ID" value="ABG04394.1"/>
    <property type="molecule type" value="Genomic_DNA"/>
</dbReference>
<dbReference type="RefSeq" id="WP_011564411.1">
    <property type="nucleotide sequence ID" value="NC_008148.1"/>
</dbReference>
<dbReference type="SMR" id="Q1AW34"/>
<dbReference type="STRING" id="266117.Rxyl_1432"/>
<dbReference type="KEGG" id="rxy:Rxyl_1432"/>
<dbReference type="eggNOG" id="COG0503">
    <property type="taxonomic scope" value="Bacteria"/>
</dbReference>
<dbReference type="HOGENOM" id="CLU_063339_3_0_11"/>
<dbReference type="OrthoDB" id="9803963at2"/>
<dbReference type="PhylomeDB" id="Q1AW34"/>
<dbReference type="UniPathway" id="UPA00588">
    <property type="reaction ID" value="UER00646"/>
</dbReference>
<dbReference type="Proteomes" id="UP000006637">
    <property type="component" value="Chromosome"/>
</dbReference>
<dbReference type="GO" id="GO:0005737">
    <property type="term" value="C:cytoplasm"/>
    <property type="evidence" value="ECO:0007669"/>
    <property type="project" value="UniProtKB-SubCell"/>
</dbReference>
<dbReference type="GO" id="GO:0002055">
    <property type="term" value="F:adenine binding"/>
    <property type="evidence" value="ECO:0007669"/>
    <property type="project" value="TreeGrafter"/>
</dbReference>
<dbReference type="GO" id="GO:0003999">
    <property type="term" value="F:adenine phosphoribosyltransferase activity"/>
    <property type="evidence" value="ECO:0007669"/>
    <property type="project" value="UniProtKB-UniRule"/>
</dbReference>
<dbReference type="GO" id="GO:0016208">
    <property type="term" value="F:AMP binding"/>
    <property type="evidence" value="ECO:0007669"/>
    <property type="project" value="TreeGrafter"/>
</dbReference>
<dbReference type="GO" id="GO:0006168">
    <property type="term" value="P:adenine salvage"/>
    <property type="evidence" value="ECO:0007669"/>
    <property type="project" value="InterPro"/>
</dbReference>
<dbReference type="GO" id="GO:0044209">
    <property type="term" value="P:AMP salvage"/>
    <property type="evidence" value="ECO:0007669"/>
    <property type="project" value="UniProtKB-UniRule"/>
</dbReference>
<dbReference type="GO" id="GO:0006166">
    <property type="term" value="P:purine ribonucleoside salvage"/>
    <property type="evidence" value="ECO:0007669"/>
    <property type="project" value="UniProtKB-KW"/>
</dbReference>
<dbReference type="CDD" id="cd06223">
    <property type="entry name" value="PRTases_typeI"/>
    <property type="match status" value="1"/>
</dbReference>
<dbReference type="FunFam" id="3.40.50.2020:FF:000004">
    <property type="entry name" value="Adenine phosphoribosyltransferase"/>
    <property type="match status" value="1"/>
</dbReference>
<dbReference type="Gene3D" id="3.40.50.2020">
    <property type="match status" value="1"/>
</dbReference>
<dbReference type="HAMAP" id="MF_00004">
    <property type="entry name" value="Aden_phosphoribosyltr"/>
    <property type="match status" value="1"/>
</dbReference>
<dbReference type="InterPro" id="IPR005764">
    <property type="entry name" value="Ade_phspho_trans"/>
</dbReference>
<dbReference type="InterPro" id="IPR000836">
    <property type="entry name" value="PRibTrfase_dom"/>
</dbReference>
<dbReference type="InterPro" id="IPR029057">
    <property type="entry name" value="PRTase-like"/>
</dbReference>
<dbReference type="InterPro" id="IPR050054">
    <property type="entry name" value="UPRTase/APRTase"/>
</dbReference>
<dbReference type="NCBIfam" id="TIGR01090">
    <property type="entry name" value="apt"/>
    <property type="match status" value="1"/>
</dbReference>
<dbReference type="NCBIfam" id="NF002634">
    <property type="entry name" value="PRK02304.1-3"/>
    <property type="match status" value="1"/>
</dbReference>
<dbReference type="NCBIfam" id="NF002636">
    <property type="entry name" value="PRK02304.1-5"/>
    <property type="match status" value="1"/>
</dbReference>
<dbReference type="PANTHER" id="PTHR32315">
    <property type="entry name" value="ADENINE PHOSPHORIBOSYLTRANSFERASE"/>
    <property type="match status" value="1"/>
</dbReference>
<dbReference type="PANTHER" id="PTHR32315:SF3">
    <property type="entry name" value="ADENINE PHOSPHORIBOSYLTRANSFERASE"/>
    <property type="match status" value="1"/>
</dbReference>
<dbReference type="Pfam" id="PF00156">
    <property type="entry name" value="Pribosyltran"/>
    <property type="match status" value="1"/>
</dbReference>
<dbReference type="SUPFAM" id="SSF53271">
    <property type="entry name" value="PRTase-like"/>
    <property type="match status" value="1"/>
</dbReference>
<evidence type="ECO:0000255" key="1">
    <source>
        <dbReference type="HAMAP-Rule" id="MF_00004"/>
    </source>
</evidence>
<proteinExistence type="inferred from homology"/>
<accession>Q1AW34</accession>
<organism>
    <name type="scientific">Rubrobacter xylanophilus (strain DSM 9941 / JCM 11954 / NBRC 16129 / PRD-1)</name>
    <dbReference type="NCBI Taxonomy" id="266117"/>
    <lineage>
        <taxon>Bacteria</taxon>
        <taxon>Bacillati</taxon>
        <taxon>Actinomycetota</taxon>
        <taxon>Rubrobacteria</taxon>
        <taxon>Rubrobacterales</taxon>
        <taxon>Rubrobacteraceae</taxon>
        <taxon>Rubrobacter</taxon>
    </lineage>
</organism>
<feature type="chain" id="PRO_0000321398" description="Adenine phosphoribosyltransferase">
    <location>
        <begin position="1"/>
        <end position="185"/>
    </location>
</feature>